<sequence length="245" mass="27926">MNVLQKQSIAEMKRVLRNKYFVLWSLIMPIAFYYFFTNVVNTNVPDQRAWEAHYLMSMTVFSVMGSSIMTLGIRMVQERSQGWAAFIRLTPLPDHIYLSAQMIGQSVIHVLSITVIFLFGAIINDIALSPFEWMMSGLWILFGALPFLALGTLIGLMRKVETAAGISNVLYMLLALGGGMWMPFEVMPDMMQSIGQWLPSYHFGSGAWELVRGGSPTWKNILILIAYMMLFMLLSKYIRRKQEAV</sequence>
<proteinExistence type="inferred from homology"/>
<keyword id="KW-1003">Cell membrane</keyword>
<keyword id="KW-0472">Membrane</keyword>
<keyword id="KW-1185">Reference proteome</keyword>
<keyword id="KW-0812">Transmembrane</keyword>
<keyword id="KW-1133">Transmembrane helix</keyword>
<keyword id="KW-0813">Transport</keyword>
<gene>
    <name type="primary">yvfS</name>
    <name type="ordered locus">BSU34080</name>
</gene>
<dbReference type="EMBL" id="Z94043">
    <property type="protein sequence ID" value="CAB08013.1"/>
    <property type="molecule type" value="Genomic_DNA"/>
</dbReference>
<dbReference type="EMBL" id="AL009126">
    <property type="protein sequence ID" value="CAB15413.1"/>
    <property type="molecule type" value="Genomic_DNA"/>
</dbReference>
<dbReference type="PIR" id="B70039">
    <property type="entry name" value="B70039"/>
</dbReference>
<dbReference type="RefSeq" id="NP_391288.1">
    <property type="nucleotide sequence ID" value="NC_000964.3"/>
</dbReference>
<dbReference type="RefSeq" id="WP_003228297.1">
    <property type="nucleotide sequence ID" value="NZ_OZ025638.1"/>
</dbReference>
<dbReference type="SMR" id="O07017"/>
<dbReference type="FunCoup" id="O07017">
    <property type="interactions" value="122"/>
</dbReference>
<dbReference type="STRING" id="224308.BSU34080"/>
<dbReference type="PaxDb" id="224308-BSU34080"/>
<dbReference type="EnsemblBacteria" id="CAB15413">
    <property type="protein sequence ID" value="CAB15413"/>
    <property type="gene ID" value="BSU_34080"/>
</dbReference>
<dbReference type="GeneID" id="936302"/>
<dbReference type="KEGG" id="bsu:BSU34080"/>
<dbReference type="PATRIC" id="fig|224308.179.peg.3694"/>
<dbReference type="eggNOG" id="COG0842">
    <property type="taxonomic scope" value="Bacteria"/>
</dbReference>
<dbReference type="InParanoid" id="O07017"/>
<dbReference type="OrthoDB" id="63188at2"/>
<dbReference type="PhylomeDB" id="O07017"/>
<dbReference type="BioCyc" id="BSUB:BSU34080-MONOMER"/>
<dbReference type="Proteomes" id="UP000001570">
    <property type="component" value="Chromosome"/>
</dbReference>
<dbReference type="GO" id="GO:0043190">
    <property type="term" value="C:ATP-binding cassette (ABC) transporter complex"/>
    <property type="evidence" value="ECO:0007669"/>
    <property type="project" value="InterPro"/>
</dbReference>
<dbReference type="GO" id="GO:0140359">
    <property type="term" value="F:ABC-type transporter activity"/>
    <property type="evidence" value="ECO:0007669"/>
    <property type="project" value="InterPro"/>
</dbReference>
<dbReference type="InterPro" id="IPR013525">
    <property type="entry name" value="ABC2_TM"/>
</dbReference>
<dbReference type="InterPro" id="IPR047817">
    <property type="entry name" value="ABC2_TM_bact-type"/>
</dbReference>
<dbReference type="InterPro" id="IPR000412">
    <property type="entry name" value="ABC_2_transport"/>
</dbReference>
<dbReference type="InterPro" id="IPR051784">
    <property type="entry name" value="Nod_factor_ABC_transporter"/>
</dbReference>
<dbReference type="PANTHER" id="PTHR43229:SF6">
    <property type="entry name" value="ABC-TYPE MULTIDRUG TRANSPORT SYSTEM, PERMEASE COMPONENT"/>
    <property type="match status" value="1"/>
</dbReference>
<dbReference type="PANTHER" id="PTHR43229">
    <property type="entry name" value="NODULATION PROTEIN J"/>
    <property type="match status" value="1"/>
</dbReference>
<dbReference type="Pfam" id="PF12698">
    <property type="entry name" value="ABC2_membrane_3"/>
    <property type="match status" value="1"/>
</dbReference>
<dbReference type="PIRSF" id="PIRSF006648">
    <property type="entry name" value="DrrB"/>
    <property type="match status" value="1"/>
</dbReference>
<dbReference type="PROSITE" id="PS51012">
    <property type="entry name" value="ABC_TM2"/>
    <property type="match status" value="1"/>
</dbReference>
<feature type="chain" id="PRO_0000360050" description="Putative transport permease YvfS">
    <location>
        <begin position="1"/>
        <end position="245"/>
    </location>
</feature>
<feature type="transmembrane region" description="Helical" evidence="1">
    <location>
        <begin position="20"/>
        <end position="40"/>
    </location>
</feature>
<feature type="transmembrane region" description="Helical" evidence="1">
    <location>
        <begin position="53"/>
        <end position="73"/>
    </location>
</feature>
<feature type="transmembrane region" description="Helical" evidence="1">
    <location>
        <begin position="103"/>
        <end position="123"/>
    </location>
</feature>
<feature type="transmembrane region" description="Helical" evidence="1">
    <location>
        <begin position="137"/>
        <end position="157"/>
    </location>
</feature>
<feature type="transmembrane region" description="Helical" evidence="1">
    <location>
        <begin position="164"/>
        <end position="184"/>
    </location>
</feature>
<feature type="transmembrane region" description="Helical" evidence="1">
    <location>
        <begin position="214"/>
        <end position="234"/>
    </location>
</feature>
<feature type="domain" description="ABC transmembrane type-2" evidence="2">
    <location>
        <begin position="20"/>
        <end position="242"/>
    </location>
</feature>
<reference key="1">
    <citation type="submission" date="1997-04" db="EMBL/GenBank/DDBJ databases">
        <authorList>
            <person name="Denizot F."/>
        </authorList>
    </citation>
    <scope>NUCLEOTIDE SEQUENCE [GENOMIC DNA]</scope>
    <source>
        <strain>168</strain>
    </source>
</reference>
<reference key="2">
    <citation type="journal article" date="1997" name="Nature">
        <title>The complete genome sequence of the Gram-positive bacterium Bacillus subtilis.</title>
        <authorList>
            <person name="Kunst F."/>
            <person name="Ogasawara N."/>
            <person name="Moszer I."/>
            <person name="Albertini A.M."/>
            <person name="Alloni G."/>
            <person name="Azevedo V."/>
            <person name="Bertero M.G."/>
            <person name="Bessieres P."/>
            <person name="Bolotin A."/>
            <person name="Borchert S."/>
            <person name="Borriss R."/>
            <person name="Boursier L."/>
            <person name="Brans A."/>
            <person name="Braun M."/>
            <person name="Brignell S.C."/>
            <person name="Bron S."/>
            <person name="Brouillet S."/>
            <person name="Bruschi C.V."/>
            <person name="Caldwell B."/>
            <person name="Capuano V."/>
            <person name="Carter N.M."/>
            <person name="Choi S.-K."/>
            <person name="Codani J.-J."/>
            <person name="Connerton I.F."/>
            <person name="Cummings N.J."/>
            <person name="Daniel R.A."/>
            <person name="Denizot F."/>
            <person name="Devine K.M."/>
            <person name="Duesterhoeft A."/>
            <person name="Ehrlich S.D."/>
            <person name="Emmerson P.T."/>
            <person name="Entian K.-D."/>
            <person name="Errington J."/>
            <person name="Fabret C."/>
            <person name="Ferrari E."/>
            <person name="Foulger D."/>
            <person name="Fritz C."/>
            <person name="Fujita M."/>
            <person name="Fujita Y."/>
            <person name="Fuma S."/>
            <person name="Galizzi A."/>
            <person name="Galleron N."/>
            <person name="Ghim S.-Y."/>
            <person name="Glaser P."/>
            <person name="Goffeau A."/>
            <person name="Golightly E.J."/>
            <person name="Grandi G."/>
            <person name="Guiseppi G."/>
            <person name="Guy B.J."/>
            <person name="Haga K."/>
            <person name="Haiech J."/>
            <person name="Harwood C.R."/>
            <person name="Henaut A."/>
            <person name="Hilbert H."/>
            <person name="Holsappel S."/>
            <person name="Hosono S."/>
            <person name="Hullo M.-F."/>
            <person name="Itaya M."/>
            <person name="Jones L.-M."/>
            <person name="Joris B."/>
            <person name="Karamata D."/>
            <person name="Kasahara Y."/>
            <person name="Klaerr-Blanchard M."/>
            <person name="Klein C."/>
            <person name="Kobayashi Y."/>
            <person name="Koetter P."/>
            <person name="Koningstein G."/>
            <person name="Krogh S."/>
            <person name="Kumano M."/>
            <person name="Kurita K."/>
            <person name="Lapidus A."/>
            <person name="Lardinois S."/>
            <person name="Lauber J."/>
            <person name="Lazarevic V."/>
            <person name="Lee S.-M."/>
            <person name="Levine A."/>
            <person name="Liu H."/>
            <person name="Masuda S."/>
            <person name="Mauel C."/>
            <person name="Medigue C."/>
            <person name="Medina N."/>
            <person name="Mellado R.P."/>
            <person name="Mizuno M."/>
            <person name="Moestl D."/>
            <person name="Nakai S."/>
            <person name="Noback M."/>
            <person name="Noone D."/>
            <person name="O'Reilly M."/>
            <person name="Ogawa K."/>
            <person name="Ogiwara A."/>
            <person name="Oudega B."/>
            <person name="Park S.-H."/>
            <person name="Parro V."/>
            <person name="Pohl T.M."/>
            <person name="Portetelle D."/>
            <person name="Porwollik S."/>
            <person name="Prescott A.M."/>
            <person name="Presecan E."/>
            <person name="Pujic P."/>
            <person name="Purnelle B."/>
            <person name="Rapoport G."/>
            <person name="Rey M."/>
            <person name="Reynolds S."/>
            <person name="Rieger M."/>
            <person name="Rivolta C."/>
            <person name="Rocha E."/>
            <person name="Roche B."/>
            <person name="Rose M."/>
            <person name="Sadaie Y."/>
            <person name="Sato T."/>
            <person name="Scanlan E."/>
            <person name="Schleich S."/>
            <person name="Schroeter R."/>
            <person name="Scoffone F."/>
            <person name="Sekiguchi J."/>
            <person name="Sekowska A."/>
            <person name="Seror S.J."/>
            <person name="Serror P."/>
            <person name="Shin B.-S."/>
            <person name="Soldo B."/>
            <person name="Sorokin A."/>
            <person name="Tacconi E."/>
            <person name="Takagi T."/>
            <person name="Takahashi H."/>
            <person name="Takemaru K."/>
            <person name="Takeuchi M."/>
            <person name="Tamakoshi A."/>
            <person name="Tanaka T."/>
            <person name="Terpstra P."/>
            <person name="Tognoni A."/>
            <person name="Tosato V."/>
            <person name="Uchiyama S."/>
            <person name="Vandenbol M."/>
            <person name="Vannier F."/>
            <person name="Vassarotti A."/>
            <person name="Viari A."/>
            <person name="Wambutt R."/>
            <person name="Wedler E."/>
            <person name="Wedler H."/>
            <person name="Weitzenegger T."/>
            <person name="Winters P."/>
            <person name="Wipat A."/>
            <person name="Yamamoto H."/>
            <person name="Yamane K."/>
            <person name="Yasumoto K."/>
            <person name="Yata K."/>
            <person name="Yoshida K."/>
            <person name="Yoshikawa H.-F."/>
            <person name="Zumstein E."/>
            <person name="Yoshikawa H."/>
            <person name="Danchin A."/>
        </authorList>
    </citation>
    <scope>NUCLEOTIDE SEQUENCE [LARGE SCALE GENOMIC DNA]</scope>
    <source>
        <strain>168</strain>
    </source>
</reference>
<evidence type="ECO:0000255" key="1"/>
<evidence type="ECO:0000255" key="2">
    <source>
        <dbReference type="PROSITE-ProRule" id="PRU00442"/>
    </source>
</evidence>
<evidence type="ECO:0000305" key="3"/>
<protein>
    <recommendedName>
        <fullName>Putative transport permease YvfS</fullName>
    </recommendedName>
</protein>
<organism>
    <name type="scientific">Bacillus subtilis (strain 168)</name>
    <dbReference type="NCBI Taxonomy" id="224308"/>
    <lineage>
        <taxon>Bacteria</taxon>
        <taxon>Bacillati</taxon>
        <taxon>Bacillota</taxon>
        <taxon>Bacilli</taxon>
        <taxon>Bacillales</taxon>
        <taxon>Bacillaceae</taxon>
        <taxon>Bacillus</taxon>
    </lineage>
</organism>
<name>YVFS_BACSU</name>
<comment type="subcellular location">
    <subcellularLocation>
        <location evidence="3">Cell membrane</location>
        <topology evidence="3">Multi-pass membrane protein</topology>
    </subcellularLocation>
</comment>
<comment type="similarity">
    <text evidence="3">Belongs to the ABC-2 integral membrane protein family.</text>
</comment>
<accession>O07017</accession>
<accession>Q795K1</accession>